<feature type="initiator methionine" description="Removed; by host" evidence="3">
    <location>
        <position position="1"/>
    </location>
</feature>
<feature type="chain" id="PRO_0000165351" description="DNA packaging ATPase P9">
    <location>
        <begin position="2"/>
        <end position="227"/>
    </location>
</feature>
<feature type="binding site" evidence="1">
    <location>
        <begin position="16"/>
        <end position="23"/>
    </location>
    <ligand>
        <name>ATP</name>
        <dbReference type="ChEBI" id="CHEBI:30616"/>
    </ligand>
</feature>
<dbReference type="EMBL" id="AY848689">
    <property type="protein sequence ID" value="AAX45927.1"/>
    <property type="molecule type" value="Genomic_DNA"/>
</dbReference>
<dbReference type="PIR" id="I40477">
    <property type="entry name" value="WMBPQ9"/>
</dbReference>
<dbReference type="RefSeq" id="NP_040689.1">
    <property type="nucleotide sequence ID" value="NC_001421.2"/>
</dbReference>
<dbReference type="RefSeq" id="YP_009639965.1">
    <property type="nucleotide sequence ID" value="NC_001421.2"/>
</dbReference>
<dbReference type="SMR" id="P27381"/>
<dbReference type="GeneID" id="1260942"/>
<dbReference type="OrthoDB" id="19573at10239"/>
<dbReference type="Proteomes" id="UP000002143">
    <property type="component" value="Segment"/>
</dbReference>
<dbReference type="GO" id="GO:0019028">
    <property type="term" value="C:viral capsid"/>
    <property type="evidence" value="ECO:0007669"/>
    <property type="project" value="UniProtKB-KW"/>
</dbReference>
<dbReference type="GO" id="GO:0005524">
    <property type="term" value="F:ATP binding"/>
    <property type="evidence" value="ECO:0007669"/>
    <property type="project" value="UniProtKB-KW"/>
</dbReference>
<dbReference type="GO" id="GO:0019073">
    <property type="term" value="P:viral DNA genome packaging"/>
    <property type="evidence" value="ECO:0000314"/>
    <property type="project" value="CACAO"/>
</dbReference>
<dbReference type="CDD" id="cd01127">
    <property type="entry name" value="TrwB_TraG_TraD_VirD4"/>
    <property type="match status" value="1"/>
</dbReference>
<dbReference type="Gene3D" id="3.40.50.300">
    <property type="entry name" value="P-loop containing nucleotide triphosphate hydrolases"/>
    <property type="match status" value="1"/>
</dbReference>
<dbReference type="InterPro" id="IPR027417">
    <property type="entry name" value="P-loop_NTPase"/>
</dbReference>
<dbReference type="SUPFAM" id="SSF52540">
    <property type="entry name" value="P-loop containing nucleoside triphosphate hydrolases"/>
    <property type="match status" value="1"/>
</dbReference>
<protein>
    <recommendedName>
        <fullName>DNA packaging ATPase P9</fullName>
    </recommendedName>
    <alternativeName>
        <fullName>Protein P9</fullName>
    </alternativeName>
</protein>
<evidence type="ECO:0000255" key="1"/>
<evidence type="ECO:0000269" key="2">
    <source>
    </source>
</evidence>
<evidence type="ECO:0000269" key="3">
    <source>
    </source>
</evidence>
<evidence type="ECO:0000269" key="4">
    <source>
    </source>
</evidence>
<reference key="1">
    <citation type="journal article" date="1991" name="Virology">
        <title>Genome organization of membrane-containing bacteriophage PRD1.</title>
        <authorList>
            <person name="Bamford J.K.H."/>
            <person name="Haenninen A.-L."/>
            <person name="Pakula T.M."/>
            <person name="Ojala P.M."/>
            <person name="Kalkkinen N."/>
            <person name="Frilander M."/>
            <person name="Bamford D.H."/>
        </authorList>
    </citation>
    <scope>NUCLEOTIDE SEQUENCE [GENOMIC DNA]</scope>
    <scope>PROTEIN SEQUENCE OF 2-7</scope>
</reference>
<reference key="2">
    <citation type="journal article" date="2005" name="J. Mol. Biol.">
        <title>A snapshot of viral evolution from genome analysis of the tectiviridae family.</title>
        <authorList>
            <person name="Saren A.M."/>
            <person name="Ravantti J.J."/>
            <person name="Benson S.D."/>
            <person name="Burnett R.M."/>
            <person name="Paulin L."/>
            <person name="Bamford D.H."/>
            <person name="Bamford J.K.H."/>
        </authorList>
    </citation>
    <scope>NUCLEOTIDE SEQUENCE [GENOMIC DNA]</scope>
</reference>
<reference key="3">
    <citation type="journal article" date="2005" name="J. Mol. Biol.">
        <title>In vitro DNA packaging of PRD1: a common mechanism for internal-membrane viruses.</title>
        <authorList>
            <person name="Stromsten N.J."/>
            <person name="Bamford D.H."/>
            <person name="Bamford J.K.H."/>
        </authorList>
    </citation>
    <scope>IDENTIFICATION IN THE PORTAL COMPLEX</scope>
</reference>
<reference key="4">
    <citation type="journal article" date="2014" name="PLoS Biol.">
        <title>A structural model of the genome packaging process in a membrane-containing double stranded DNA virus.</title>
        <authorList>
            <person name="Hong C."/>
            <person name="Oksanen H.M."/>
            <person name="Liu X."/>
            <person name="Jakana J."/>
            <person name="Bamford D.H."/>
            <person name="Chiu W."/>
        </authorList>
    </citation>
    <scope>FUNCTION</scope>
    <scope>SUBUNIT</scope>
    <scope>IDENTIFICATION IN THE PORTAL COMPLEX</scope>
    <scope>SUBCELLULAR LOCATION</scope>
</reference>
<name>PKG9_BPPRD</name>
<proteinExistence type="evidence at protein level"/>
<gene>
    <name type="primary">IX</name>
</gene>
<comment type="function">
    <text evidence="4">Together with the packaging efficiency factor P6, forms the external part of the portal vertex that is embeded in the capsid and which plays critical roles in genome packaging and genome ejection. Both proteins multimerize as a single ring-shaped heterdodecamer arranged around a central channel.</text>
</comment>
<comment type="subunit">
    <text evidence="2 4">Heterodimer of P6 and P9; further multimerizes as hexamers of heterodimers. Part of the dodecameric portal complex that is composed of the packaging efficiency factor P6, the DNA packaging ATPase P9, and the internal heterododecamer P20/P22 which spans the virion inner membrane.</text>
</comment>
<comment type="subcellular location">
    <subcellularLocation>
        <location>Virion</location>
    </subcellularLocation>
    <text evidence="4">Component of the capsid. Localizes at the unique vertex of the capsid, which extends to the internal membrane via two small integral membrane proteins, P20 and P22.</text>
</comment>
<sequence length="227" mass="25787">MTIRMPNDRQRILVLGKTGTGKTCAAVWHLSQKDFKRKAWIVLNHKGDDLIDSIEGANHVDLNFRPKKPGLYIYHPIPDVDDAEVTQLLWDIHAMGDIGVYVDEGYMIPNRDPAFQALLTQGRSKKIPMIILSQRPVWLTRFAISESDFFQIFQLGDQRDRQTVQGFVPVDLEKLMQAPVNTVPALKKFHSIYYDVGANNCVIMTPVPTADAVLARFDLGKKRKQTL</sequence>
<organism>
    <name type="scientific">Enterobacteria phage PRD1</name>
    <name type="common">Bacteriophage PRD1</name>
    <dbReference type="NCBI Taxonomy" id="10658"/>
    <lineage>
        <taxon>Viruses</taxon>
        <taxon>Varidnaviria</taxon>
        <taxon>Bamfordvirae</taxon>
        <taxon>Preplasmiviricota</taxon>
        <taxon>Tectiliviricetes</taxon>
        <taxon>Kalamavirales</taxon>
        <taxon>Tectiviridae</taxon>
        <taxon>Alphatectivirus</taxon>
        <taxon>Alphatectivirus PRD1</taxon>
    </lineage>
</organism>
<organismHost>
    <name type="scientific">Acinetobacter calcoaceticus</name>
    <dbReference type="NCBI Taxonomy" id="471"/>
</organismHost>
<organismHost>
    <name type="scientific">Escherichia coli</name>
    <dbReference type="NCBI Taxonomy" id="562"/>
</organismHost>
<organismHost>
    <name type="scientific">Proteus mirabilis</name>
    <dbReference type="NCBI Taxonomy" id="584"/>
</organismHost>
<organismHost>
    <name type="scientific">Pseudomonas aeruginosa</name>
    <dbReference type="NCBI Taxonomy" id="287"/>
</organismHost>
<organismHost>
    <name type="scientific">Pseudomonas fluorescens</name>
    <dbReference type="NCBI Taxonomy" id="294"/>
</organismHost>
<organismHost>
    <name type="scientific">Pseudomonas putida</name>
    <name type="common">Arthrobacter siderocapsulatus</name>
    <dbReference type="NCBI Taxonomy" id="303"/>
</organismHost>
<organismHost>
    <name type="scientific">Salmonella typhimurium</name>
    <dbReference type="NCBI Taxonomy" id="90371"/>
</organismHost>
<organismHost>
    <name type="scientific">Vibrio cholerae</name>
    <dbReference type="NCBI Taxonomy" id="666"/>
</organismHost>
<keyword id="KW-0067">ATP-binding</keyword>
<keyword id="KW-0167">Capsid protein</keyword>
<keyword id="KW-0903">Direct protein sequencing</keyword>
<keyword id="KW-0547">Nucleotide-binding</keyword>
<keyword id="KW-1185">Reference proteome</keyword>
<keyword id="KW-0231">Viral genome packaging</keyword>
<keyword id="KW-1188">Viral release from host cell</keyword>
<keyword id="KW-0946">Virion</keyword>
<accession>P27381</accession>
<accession>Q3T4N5</accession>